<comment type="catalytic activity">
    <reaction evidence="1">
        <text>L-histidine = trans-urocanate + NH4(+)</text>
        <dbReference type="Rhea" id="RHEA:21232"/>
        <dbReference type="ChEBI" id="CHEBI:17771"/>
        <dbReference type="ChEBI" id="CHEBI:28938"/>
        <dbReference type="ChEBI" id="CHEBI:57595"/>
        <dbReference type="EC" id="4.3.1.3"/>
    </reaction>
</comment>
<comment type="pathway">
    <text evidence="1">Amino-acid degradation; L-histidine degradation into L-glutamate; N-formimidoyl-L-glutamate from L-histidine: step 1/3.</text>
</comment>
<comment type="subcellular location">
    <subcellularLocation>
        <location evidence="1">Cytoplasm</location>
    </subcellularLocation>
</comment>
<comment type="PTM">
    <text evidence="1">Contains an active site 4-methylidene-imidazol-5-one (MIO), which is formed autocatalytically by cyclization and dehydration of residues Ala-Ser-Gly.</text>
</comment>
<comment type="similarity">
    <text evidence="1">Belongs to the PAL/histidase family.</text>
</comment>
<feature type="chain" id="PRO_1000100443" description="Histidine ammonia-lyase">
    <location>
        <begin position="1"/>
        <end position="507"/>
    </location>
</feature>
<feature type="modified residue" description="2,3-didehydroalanine (Ser)" evidence="1">
    <location>
        <position position="142"/>
    </location>
</feature>
<feature type="cross-link" description="5-imidazolinone (Ala-Gly)" evidence="1">
    <location>
        <begin position="141"/>
        <end position="143"/>
    </location>
</feature>
<name>HUTH_NATTJ</name>
<proteinExistence type="inferred from homology"/>
<evidence type="ECO:0000255" key="1">
    <source>
        <dbReference type="HAMAP-Rule" id="MF_00229"/>
    </source>
</evidence>
<dbReference type="EC" id="4.3.1.3" evidence="1"/>
<dbReference type="EMBL" id="CP001034">
    <property type="protein sequence ID" value="ACB86368.1"/>
    <property type="molecule type" value="Genomic_DNA"/>
</dbReference>
<dbReference type="RefSeq" id="WP_012449201.1">
    <property type="nucleotide sequence ID" value="NC_010718.1"/>
</dbReference>
<dbReference type="SMR" id="B2A3D9"/>
<dbReference type="FunCoup" id="B2A3D9">
    <property type="interactions" value="53"/>
</dbReference>
<dbReference type="STRING" id="457570.Nther_2820"/>
<dbReference type="KEGG" id="nth:Nther_2820"/>
<dbReference type="eggNOG" id="COG2986">
    <property type="taxonomic scope" value="Bacteria"/>
</dbReference>
<dbReference type="HOGENOM" id="CLU_014801_4_0_9"/>
<dbReference type="InParanoid" id="B2A3D9"/>
<dbReference type="OrthoDB" id="9806955at2"/>
<dbReference type="UniPathway" id="UPA00379">
    <property type="reaction ID" value="UER00549"/>
</dbReference>
<dbReference type="Proteomes" id="UP000001683">
    <property type="component" value="Chromosome"/>
</dbReference>
<dbReference type="GO" id="GO:0005737">
    <property type="term" value="C:cytoplasm"/>
    <property type="evidence" value="ECO:0007669"/>
    <property type="project" value="UniProtKB-SubCell"/>
</dbReference>
<dbReference type="GO" id="GO:0004397">
    <property type="term" value="F:histidine ammonia-lyase activity"/>
    <property type="evidence" value="ECO:0007669"/>
    <property type="project" value="UniProtKB-UniRule"/>
</dbReference>
<dbReference type="GO" id="GO:0019556">
    <property type="term" value="P:L-histidine catabolic process to glutamate and formamide"/>
    <property type="evidence" value="ECO:0007669"/>
    <property type="project" value="UniProtKB-UniPathway"/>
</dbReference>
<dbReference type="GO" id="GO:0019557">
    <property type="term" value="P:L-histidine catabolic process to glutamate and formate"/>
    <property type="evidence" value="ECO:0007669"/>
    <property type="project" value="UniProtKB-UniPathway"/>
</dbReference>
<dbReference type="CDD" id="cd00332">
    <property type="entry name" value="PAL-HAL"/>
    <property type="match status" value="1"/>
</dbReference>
<dbReference type="FunFam" id="1.10.275.10:FF:000005">
    <property type="entry name" value="Histidine ammonia-lyase"/>
    <property type="match status" value="1"/>
</dbReference>
<dbReference type="FunFam" id="1.20.200.10:FF:000003">
    <property type="entry name" value="Histidine ammonia-lyase"/>
    <property type="match status" value="1"/>
</dbReference>
<dbReference type="Gene3D" id="1.20.200.10">
    <property type="entry name" value="Fumarase/aspartase (Central domain)"/>
    <property type="match status" value="1"/>
</dbReference>
<dbReference type="Gene3D" id="1.10.275.10">
    <property type="entry name" value="Fumarase/aspartase (N-terminal domain)"/>
    <property type="match status" value="1"/>
</dbReference>
<dbReference type="HAMAP" id="MF_00229">
    <property type="entry name" value="His_ammonia_lyase"/>
    <property type="match status" value="1"/>
</dbReference>
<dbReference type="InterPro" id="IPR001106">
    <property type="entry name" value="Aromatic_Lyase"/>
</dbReference>
<dbReference type="InterPro" id="IPR024083">
    <property type="entry name" value="Fumarase/histidase_N"/>
</dbReference>
<dbReference type="InterPro" id="IPR005921">
    <property type="entry name" value="HutH"/>
</dbReference>
<dbReference type="InterPro" id="IPR008948">
    <property type="entry name" value="L-Aspartase-like"/>
</dbReference>
<dbReference type="InterPro" id="IPR022313">
    <property type="entry name" value="Phe/His_NH3-lyase_AS"/>
</dbReference>
<dbReference type="NCBIfam" id="TIGR01225">
    <property type="entry name" value="hutH"/>
    <property type="match status" value="1"/>
</dbReference>
<dbReference type="NCBIfam" id="NF006871">
    <property type="entry name" value="PRK09367.1"/>
    <property type="match status" value="1"/>
</dbReference>
<dbReference type="PANTHER" id="PTHR10362">
    <property type="entry name" value="HISTIDINE AMMONIA-LYASE"/>
    <property type="match status" value="1"/>
</dbReference>
<dbReference type="Pfam" id="PF00221">
    <property type="entry name" value="Lyase_aromatic"/>
    <property type="match status" value="1"/>
</dbReference>
<dbReference type="SUPFAM" id="SSF48557">
    <property type="entry name" value="L-aspartase-like"/>
    <property type="match status" value="1"/>
</dbReference>
<dbReference type="PROSITE" id="PS00488">
    <property type="entry name" value="PAL_HISTIDASE"/>
    <property type="match status" value="1"/>
</dbReference>
<reference key="1">
    <citation type="submission" date="2008-04" db="EMBL/GenBank/DDBJ databases">
        <title>Complete sequence of chromosome of Natranaerobius thermophilus JW/NM-WN-LF.</title>
        <authorList>
            <consortium name="US DOE Joint Genome Institute"/>
            <person name="Copeland A."/>
            <person name="Lucas S."/>
            <person name="Lapidus A."/>
            <person name="Glavina del Rio T."/>
            <person name="Dalin E."/>
            <person name="Tice H."/>
            <person name="Bruce D."/>
            <person name="Goodwin L."/>
            <person name="Pitluck S."/>
            <person name="Chertkov O."/>
            <person name="Brettin T."/>
            <person name="Detter J.C."/>
            <person name="Han C."/>
            <person name="Kuske C.R."/>
            <person name="Schmutz J."/>
            <person name="Larimer F."/>
            <person name="Land M."/>
            <person name="Hauser L."/>
            <person name="Kyrpides N."/>
            <person name="Lykidis A."/>
            <person name="Mesbah N.M."/>
            <person name="Wiegel J."/>
        </authorList>
    </citation>
    <scope>NUCLEOTIDE SEQUENCE [LARGE SCALE GENOMIC DNA]</scope>
    <source>
        <strain>ATCC BAA-1301 / DSM 18059 / JW/NM-WN-LF</strain>
    </source>
</reference>
<keyword id="KW-0963">Cytoplasm</keyword>
<keyword id="KW-0369">Histidine metabolism</keyword>
<keyword id="KW-0456">Lyase</keyword>
<keyword id="KW-1185">Reference proteome</keyword>
<organism>
    <name type="scientific">Natranaerobius thermophilus (strain ATCC BAA-1301 / DSM 18059 / JW/NM-WN-LF)</name>
    <dbReference type="NCBI Taxonomy" id="457570"/>
    <lineage>
        <taxon>Bacteria</taxon>
        <taxon>Bacillati</taxon>
        <taxon>Bacillota</taxon>
        <taxon>Clostridia</taxon>
        <taxon>Natranaerobiales</taxon>
        <taxon>Natranaerobiaceae</taxon>
        <taxon>Natranaerobius</taxon>
    </lineage>
</organism>
<sequence length="507" mass="55362">MIHLTGENLKFKEIEKVINHGEQVELSTQAKENIIASRRLIDDLTEKESIVYGVTTGFGKFSDTFISSENLQQLQENLILSHSAGVGEPFSEQVVRGMMLFRANSLAKGHSGIRLETVQLLIDMLNKGVHPIIPSKGSLGASGDLAPLAHMVLVMIGKGEAYYHGDRMAGDKALSEAGLSPVKLGAKEGLALINGTQAIVSVGTLTWLRMKNLLKTADICAAMTIDSLEGILDAFQDKIFRLRPHPGHGKTAENIRRLLQDSEIIENREHKRVQDAYTLRCIPQIHGASKDAHEHIGGILNREINSTTDNPLIFPQENEVISGGNFHGQPLALPMDYMSMAIAELANVAERRIERLVNPNLNFGLPPFLIKDGGVSSGFMIAQYTAASLVSENKSLAHPASVDSIPSSANQEDHVSMGTIGARKALSILENTEKVLAIELLCASQALDYRQPRQSGSGTRKAYELVREQVPHLAEDRELASDIETVEQLIVEGRLVSELEKTIGELK</sequence>
<gene>
    <name evidence="1" type="primary">hutH</name>
    <name type="ordered locus">Nther_2820</name>
</gene>
<protein>
    <recommendedName>
        <fullName evidence="1">Histidine ammonia-lyase</fullName>
        <shortName evidence="1">Histidase</shortName>
        <ecNumber evidence="1">4.3.1.3</ecNumber>
    </recommendedName>
</protein>
<accession>B2A3D9</accession>